<proteinExistence type="inferred from homology"/>
<keyword id="KW-1185">Reference proteome</keyword>
<accession>Q3ZCB2</accession>
<evidence type="ECO:0000305" key="1"/>
<dbReference type="EMBL" id="BC102588">
    <property type="protein sequence ID" value="AAI02589.1"/>
    <property type="molecule type" value="mRNA"/>
</dbReference>
<dbReference type="RefSeq" id="NP_001070455.1">
    <property type="nucleotide sequence ID" value="NM_001076987.2"/>
</dbReference>
<dbReference type="RefSeq" id="XP_015327181.1">
    <property type="nucleotide sequence ID" value="XM_015471695.1"/>
</dbReference>
<dbReference type="FunCoup" id="Q3ZCB2">
    <property type="interactions" value="119"/>
</dbReference>
<dbReference type="PaxDb" id="9913-ENSBTAP00000042447"/>
<dbReference type="Ensembl" id="ENSBTAT00000069324.2">
    <property type="protein sequence ID" value="ENSBTAP00000067552.2"/>
    <property type="gene ID" value="ENSBTAG00000031750.3"/>
</dbReference>
<dbReference type="GeneID" id="767910"/>
<dbReference type="KEGG" id="bta:767910"/>
<dbReference type="CTD" id="100685470"/>
<dbReference type="VEuPathDB" id="HostDB:ENSBTAG00000031750"/>
<dbReference type="VGNC" id="VGNC:56782">
    <property type="gene designation" value="PLAC8B"/>
</dbReference>
<dbReference type="eggNOG" id="ENOG502S3TI">
    <property type="taxonomic scope" value="Eukaryota"/>
</dbReference>
<dbReference type="GeneTree" id="ENSGT00940000157329"/>
<dbReference type="HOGENOM" id="CLU_083147_5_2_1"/>
<dbReference type="InParanoid" id="Q3ZCB2"/>
<dbReference type="OMA" id="YLATLCC"/>
<dbReference type="OrthoDB" id="1045822at2759"/>
<dbReference type="TreeFam" id="TF330308"/>
<dbReference type="Reactome" id="R-BTA-6798695">
    <property type="pathway name" value="Neutrophil degranulation"/>
</dbReference>
<dbReference type="Proteomes" id="UP000009136">
    <property type="component" value="Chromosome 6"/>
</dbReference>
<dbReference type="Bgee" id="ENSBTAG00000031750">
    <property type="expression patterns" value="Expressed in blood and 102 other cell types or tissues"/>
</dbReference>
<dbReference type="GO" id="GO:0045944">
    <property type="term" value="P:positive regulation of transcription by RNA polymerase II"/>
    <property type="evidence" value="ECO:0000318"/>
    <property type="project" value="GO_Central"/>
</dbReference>
<dbReference type="InterPro" id="IPR006461">
    <property type="entry name" value="PLAC_motif_containing"/>
</dbReference>
<dbReference type="NCBIfam" id="TIGR01571">
    <property type="entry name" value="A_thal_Cys_rich"/>
    <property type="match status" value="1"/>
</dbReference>
<dbReference type="PANTHER" id="PTHR15907">
    <property type="entry name" value="DUF614 FAMILY PROTEIN-RELATED"/>
    <property type="match status" value="1"/>
</dbReference>
<dbReference type="Pfam" id="PF04749">
    <property type="entry name" value="PLAC8"/>
    <property type="match status" value="1"/>
</dbReference>
<comment type="similarity">
    <text evidence="1">Belongs to the cornifelin family.</text>
</comment>
<name>PLAC8_BOVIN</name>
<gene>
    <name type="primary">PLAC8</name>
</gene>
<feature type="chain" id="PRO_0000253636" description="Placenta-specific gene 8 protein">
    <location>
        <begin position="1"/>
        <end position="116"/>
    </location>
</feature>
<sequence>MQAASSPVVIVTQPGVGSGPAPQNSNWQTGLCDCFSDCGVCLCGTFCFTCLACQVASDMNECCLCGTSVAMRTLYRTRYGIPGSICDDFMVTHCCPLCSLCQIKRDINRRRANRTF</sequence>
<protein>
    <recommendedName>
        <fullName>Placenta-specific gene 8 protein</fullName>
    </recommendedName>
</protein>
<reference key="1">
    <citation type="submission" date="2005-08" db="EMBL/GenBank/DDBJ databases">
        <authorList>
            <consortium name="NIH - Mammalian Gene Collection (MGC) project"/>
        </authorList>
    </citation>
    <scope>NUCLEOTIDE SEQUENCE [LARGE SCALE MRNA]</scope>
    <source>
        <strain>Crossbred X Angus</strain>
        <tissue>Ileum</tissue>
    </source>
</reference>
<organism>
    <name type="scientific">Bos taurus</name>
    <name type="common">Bovine</name>
    <dbReference type="NCBI Taxonomy" id="9913"/>
    <lineage>
        <taxon>Eukaryota</taxon>
        <taxon>Metazoa</taxon>
        <taxon>Chordata</taxon>
        <taxon>Craniata</taxon>
        <taxon>Vertebrata</taxon>
        <taxon>Euteleostomi</taxon>
        <taxon>Mammalia</taxon>
        <taxon>Eutheria</taxon>
        <taxon>Laurasiatheria</taxon>
        <taxon>Artiodactyla</taxon>
        <taxon>Ruminantia</taxon>
        <taxon>Pecora</taxon>
        <taxon>Bovidae</taxon>
        <taxon>Bovinae</taxon>
        <taxon>Bos</taxon>
    </lineage>
</organism>